<organism>
    <name type="scientific">Escherichia coli (strain K12)</name>
    <dbReference type="NCBI Taxonomy" id="83333"/>
    <lineage>
        <taxon>Bacteria</taxon>
        <taxon>Pseudomonadati</taxon>
        <taxon>Pseudomonadota</taxon>
        <taxon>Gammaproteobacteria</taxon>
        <taxon>Enterobacterales</taxon>
        <taxon>Enterobacteriaceae</taxon>
        <taxon>Escherichia</taxon>
    </lineage>
</organism>
<dbReference type="EC" id="2.5.1.129" evidence="1"/>
<dbReference type="EMBL" id="AH000881">
    <property type="protein sequence ID" value="AAA23970.1"/>
    <property type="molecule type" value="Genomic_DNA"/>
</dbReference>
<dbReference type="EMBL" id="U00096">
    <property type="protein sequence ID" value="AAC75371.1"/>
    <property type="molecule type" value="Genomic_DNA"/>
</dbReference>
<dbReference type="EMBL" id="AP009048">
    <property type="protein sequence ID" value="BAA16157.1"/>
    <property type="molecule type" value="Genomic_DNA"/>
</dbReference>
<dbReference type="PIR" id="E65003">
    <property type="entry name" value="XMECFD"/>
</dbReference>
<dbReference type="RefSeq" id="NP_416814.1">
    <property type="nucleotide sequence ID" value="NC_000913.3"/>
</dbReference>
<dbReference type="RefSeq" id="WP_000825700.1">
    <property type="nucleotide sequence ID" value="NZ_STEB01000008.1"/>
</dbReference>
<dbReference type="SMR" id="P0AG03"/>
<dbReference type="BioGRID" id="4260526">
    <property type="interactions" value="363"/>
</dbReference>
<dbReference type="DIP" id="DIP-47873N"/>
<dbReference type="FunCoup" id="P0AG03">
    <property type="interactions" value="401"/>
</dbReference>
<dbReference type="IntAct" id="P0AG03">
    <property type="interactions" value="6"/>
</dbReference>
<dbReference type="STRING" id="511145.b2311"/>
<dbReference type="PaxDb" id="511145-b2311"/>
<dbReference type="EnsemblBacteria" id="AAC75371">
    <property type="protein sequence ID" value="AAC75371"/>
    <property type="gene ID" value="b2311"/>
</dbReference>
<dbReference type="GeneID" id="949033"/>
<dbReference type="KEGG" id="ecj:JW2308"/>
<dbReference type="KEGG" id="eco:b2311"/>
<dbReference type="KEGG" id="ecoc:C3026_12885"/>
<dbReference type="PATRIC" id="fig|511145.12.peg.2406"/>
<dbReference type="EchoBASE" id="EB1037"/>
<dbReference type="eggNOG" id="COG0163">
    <property type="taxonomic scope" value="Bacteria"/>
</dbReference>
<dbReference type="HOGENOM" id="CLU_074522_0_1_6"/>
<dbReference type="InParanoid" id="P0AG03"/>
<dbReference type="OMA" id="GATHIQD"/>
<dbReference type="OrthoDB" id="9781577at2"/>
<dbReference type="PhylomeDB" id="P0AG03"/>
<dbReference type="BioCyc" id="EcoCyc:UBIX-MONOMER"/>
<dbReference type="BioCyc" id="MetaCyc:UBIX-MONOMER"/>
<dbReference type="PRO" id="PR:P0AG03"/>
<dbReference type="Proteomes" id="UP000000625">
    <property type="component" value="Chromosome"/>
</dbReference>
<dbReference type="GO" id="GO:0016831">
    <property type="term" value="F:carboxy-lyase activity"/>
    <property type="evidence" value="ECO:0000318"/>
    <property type="project" value="GO_Central"/>
</dbReference>
<dbReference type="GO" id="GO:0106141">
    <property type="term" value="F:flavin prenyltransferase activity"/>
    <property type="evidence" value="ECO:0000314"/>
    <property type="project" value="EcoCyc"/>
</dbReference>
<dbReference type="GO" id="GO:0120232">
    <property type="term" value="P:prenyl-FMNH2 biosynthetic process"/>
    <property type="evidence" value="ECO:0000316"/>
    <property type="project" value="EcoCyc"/>
</dbReference>
<dbReference type="GO" id="GO:0006744">
    <property type="term" value="P:ubiquinone biosynthetic process"/>
    <property type="evidence" value="ECO:0000315"/>
    <property type="project" value="EcoCyc"/>
</dbReference>
<dbReference type="FunFam" id="3.40.50.1950:FF:000001">
    <property type="entry name" value="Flavin prenyltransferase UbiX"/>
    <property type="match status" value="1"/>
</dbReference>
<dbReference type="Gene3D" id="3.40.50.1950">
    <property type="entry name" value="Flavin prenyltransferase-like"/>
    <property type="match status" value="1"/>
</dbReference>
<dbReference type="HAMAP" id="MF_01984">
    <property type="entry name" value="ubiX_pad"/>
    <property type="match status" value="1"/>
</dbReference>
<dbReference type="InterPro" id="IPR036551">
    <property type="entry name" value="Flavin_trans-like"/>
</dbReference>
<dbReference type="InterPro" id="IPR003382">
    <property type="entry name" value="Flavoprotein"/>
</dbReference>
<dbReference type="InterPro" id="IPR004507">
    <property type="entry name" value="UbiX-like"/>
</dbReference>
<dbReference type="NCBIfam" id="NF004685">
    <property type="entry name" value="PRK06029.1"/>
    <property type="match status" value="1"/>
</dbReference>
<dbReference type="NCBIfam" id="TIGR00421">
    <property type="entry name" value="ubiX_pad"/>
    <property type="match status" value="1"/>
</dbReference>
<dbReference type="PANTHER" id="PTHR43374">
    <property type="entry name" value="FLAVIN PRENYLTRANSFERASE"/>
    <property type="match status" value="1"/>
</dbReference>
<dbReference type="PANTHER" id="PTHR43374:SF1">
    <property type="entry name" value="FLAVIN PRENYLTRANSFERASE PAD1, MITOCHONDRIAL"/>
    <property type="match status" value="1"/>
</dbReference>
<dbReference type="Pfam" id="PF02441">
    <property type="entry name" value="Flavoprotein"/>
    <property type="match status" value="1"/>
</dbReference>
<dbReference type="SUPFAM" id="SSF52507">
    <property type="entry name" value="Homo-oligomeric flavin-containing Cys decarboxylases, HFCD"/>
    <property type="match status" value="1"/>
</dbReference>
<keyword id="KW-0285">Flavoprotein</keyword>
<keyword id="KW-0288">FMN</keyword>
<keyword id="KW-0637">Prenyltransferase</keyword>
<keyword id="KW-1185">Reference proteome</keyword>
<keyword id="KW-0808">Transferase</keyword>
<name>UBIX_ECOLI</name>
<sequence>MKRLIVGISGASGAIYGVRLLQVLRDVTDIETHLVMSQAARQTLSLETDFSLREVQALADVTHDARDIAASISSGSFQTLGMVILPCSIKTLSGIVHSYTDGLLTRAADVVLKERRPLVLCVRETPLHLGHLRLMTQAAEIGAVIMPPVPAFYHRPQSLDDVINQTVNRVLDQFAITLPEDLFARWQGA</sequence>
<protein>
    <recommendedName>
        <fullName evidence="1">Flavin prenyltransferase UbiX</fullName>
        <ecNumber evidence="1">2.5.1.129</ecNumber>
    </recommendedName>
</protein>
<evidence type="ECO:0000255" key="1">
    <source>
        <dbReference type="HAMAP-Rule" id="MF_01984"/>
    </source>
</evidence>
<evidence type="ECO:0000269" key="2">
    <source>
    </source>
</evidence>
<evidence type="ECO:0000269" key="3">
    <source>
    </source>
</evidence>
<evidence type="ECO:0000269" key="4">
    <source>
    </source>
</evidence>
<evidence type="ECO:0000305" key="5"/>
<feature type="chain" id="PRO_0000134950" description="Flavin prenyltransferase UbiX">
    <location>
        <begin position="1"/>
        <end position="189"/>
    </location>
</feature>
<feature type="binding site" evidence="1">
    <location>
        <begin position="10"/>
        <end position="12"/>
    </location>
    <ligand>
        <name>FMN</name>
        <dbReference type="ChEBI" id="CHEBI:58210"/>
    </ligand>
</feature>
<feature type="binding site" evidence="1">
    <location>
        <position position="37"/>
    </location>
    <ligand>
        <name>FMN</name>
        <dbReference type="ChEBI" id="CHEBI:58210"/>
    </ligand>
</feature>
<feature type="binding site" evidence="1">
    <location>
        <begin position="88"/>
        <end position="91"/>
    </location>
    <ligand>
        <name>FMN</name>
        <dbReference type="ChEBI" id="CHEBI:58210"/>
    </ligand>
</feature>
<feature type="binding site" evidence="1">
    <location>
        <position position="123"/>
    </location>
    <ligand>
        <name>FMN</name>
        <dbReference type="ChEBI" id="CHEBI:58210"/>
    </ligand>
</feature>
<feature type="binding site" evidence="1">
    <location>
        <position position="153"/>
    </location>
    <ligand>
        <name>dimethylallyl phosphate</name>
        <dbReference type="ChEBI" id="CHEBI:88052"/>
    </ligand>
</feature>
<feature type="binding site" evidence="1">
    <location>
        <position position="169"/>
    </location>
    <ligand>
        <name>dimethylallyl phosphate</name>
        <dbReference type="ChEBI" id="CHEBI:88052"/>
    </ligand>
</feature>
<feature type="sequence conflict" description="In Ref. 1; AAA23970." evidence="5" ref="1">
    <original>T</original>
    <variation>S</variation>
    <location>
        <position position="62"/>
    </location>
</feature>
<feature type="sequence conflict" description="In Ref. 1; AAA23970." evidence="5" ref="1">
    <original>AEIGAVIMPP</original>
    <variation>GRNRCGDYAS</variation>
    <location>
        <begin position="139"/>
        <end position="148"/>
    </location>
</feature>
<comment type="function">
    <text evidence="1 3 4">Flavin prenyltransferase that catalyzes the synthesis of the prenylated FMN cofactor (prenyl-FMN) for 4-hydroxy-3-polyprenylbenzoic acid decarboxylase UbiD. The prenyltransferase is metal-independent and links a dimethylallyl moiety from dimethylallyl monophosphate (DMAP) to the flavin N5 and C6 atoms of FMN (By similarity). Acts in concert with UbiD to perform the decarboxylation of 4-hydroxy-3-octaprenyl-benzoate, a step in the biosynthesis of coenzyme Q (PubMed:16923914, PubMed:17889824).</text>
</comment>
<comment type="catalytic activity">
    <reaction evidence="1">
        <text>dimethylallyl phosphate + FMNH2 = prenylated FMNH2 + phosphate</text>
        <dbReference type="Rhea" id="RHEA:37743"/>
        <dbReference type="ChEBI" id="CHEBI:43474"/>
        <dbReference type="ChEBI" id="CHEBI:57618"/>
        <dbReference type="ChEBI" id="CHEBI:87467"/>
        <dbReference type="ChEBI" id="CHEBI:88052"/>
        <dbReference type="EC" id="2.5.1.129"/>
    </reaction>
</comment>
<comment type="induction">
    <text evidence="2">During aerobic growth, expression depends on the carbon source, with the highest expression on succinate, a median expression on glycerol, and the lowest on glucose. During anaerobic growth, glucose does not inhibit expression.</text>
</comment>
<comment type="disruption phenotype">
    <text evidence="4">Cells lacking this gene produce very low levels of coenzyme Q(8) during logarithmic growth, grow slowly on succinate as the sole carbon source, accumulate 4-hydroxy-3-octaprenyl-benzoate, and have reduced UbiG O-methyltransferase activity. In contrast, they synthesize near normal levels of Q(8) in the stationary phase.</text>
</comment>
<comment type="similarity">
    <text evidence="1">Belongs to the UbiX/PAD1 family.</text>
</comment>
<reference key="1">
    <citation type="journal article" date="1987" name="J. Biol. Chem.">
        <title>The hisT-purF region of the Escherichia coli K-12 chromosome. Identification of additional genes of the hisT and purF operons.</title>
        <authorList>
            <person name="Nonet M.L."/>
            <person name="Marvel C.C."/>
            <person name="Tolan D.R."/>
        </authorList>
    </citation>
    <scope>NUCLEOTIDE SEQUENCE [GENOMIC DNA]</scope>
    <source>
        <strain>K12</strain>
    </source>
</reference>
<reference key="2">
    <citation type="journal article" date="1997" name="DNA Res.">
        <title>Construction of a contiguous 874-kb sequence of the Escherichia coli-K12 genome corresponding to 50.0-68.8 min on the linkage map and analysis of its sequence features.</title>
        <authorList>
            <person name="Yamamoto Y."/>
            <person name="Aiba H."/>
            <person name="Baba T."/>
            <person name="Hayashi K."/>
            <person name="Inada T."/>
            <person name="Isono K."/>
            <person name="Itoh T."/>
            <person name="Kimura S."/>
            <person name="Kitagawa M."/>
            <person name="Makino K."/>
            <person name="Miki T."/>
            <person name="Mitsuhashi N."/>
            <person name="Mizobuchi K."/>
            <person name="Mori H."/>
            <person name="Nakade S."/>
            <person name="Nakamura Y."/>
            <person name="Nashimoto H."/>
            <person name="Oshima T."/>
            <person name="Oyama S."/>
            <person name="Saito N."/>
            <person name="Sampei G."/>
            <person name="Satoh Y."/>
            <person name="Sivasundaram S."/>
            <person name="Tagami H."/>
            <person name="Takahashi H."/>
            <person name="Takeda J."/>
            <person name="Takemoto K."/>
            <person name="Uehara K."/>
            <person name="Wada C."/>
            <person name="Yamagata S."/>
            <person name="Horiuchi T."/>
        </authorList>
    </citation>
    <scope>NUCLEOTIDE SEQUENCE [LARGE SCALE GENOMIC DNA]</scope>
    <source>
        <strain>K12 / W3110 / ATCC 27325 / DSM 5911</strain>
    </source>
</reference>
<reference key="3">
    <citation type="journal article" date="1997" name="Science">
        <title>The complete genome sequence of Escherichia coli K-12.</title>
        <authorList>
            <person name="Blattner F.R."/>
            <person name="Plunkett G. III"/>
            <person name="Bloch C.A."/>
            <person name="Perna N.T."/>
            <person name="Burland V."/>
            <person name="Riley M."/>
            <person name="Collado-Vides J."/>
            <person name="Glasner J.D."/>
            <person name="Rode C.K."/>
            <person name="Mayhew G.F."/>
            <person name="Gregor J."/>
            <person name="Davis N.W."/>
            <person name="Kirkpatrick H.A."/>
            <person name="Goeden M.A."/>
            <person name="Rose D.J."/>
            <person name="Mau B."/>
            <person name="Shao Y."/>
        </authorList>
    </citation>
    <scope>NUCLEOTIDE SEQUENCE [LARGE SCALE GENOMIC DNA]</scope>
    <source>
        <strain>K12 / MG1655 / ATCC 47076</strain>
    </source>
</reference>
<reference key="4">
    <citation type="journal article" date="2006" name="Mol. Syst. Biol.">
        <title>Highly accurate genome sequences of Escherichia coli K-12 strains MG1655 and W3110.</title>
        <authorList>
            <person name="Hayashi K."/>
            <person name="Morooka N."/>
            <person name="Yamamoto Y."/>
            <person name="Fujita K."/>
            <person name="Isono K."/>
            <person name="Choi S."/>
            <person name="Ohtsubo E."/>
            <person name="Baba T."/>
            <person name="Wanner B.L."/>
            <person name="Mori H."/>
            <person name="Horiuchi T."/>
        </authorList>
    </citation>
    <scope>NUCLEOTIDE SEQUENCE [LARGE SCALE GENOMIC DNA]</scope>
    <source>
        <strain>K12 / W3110 / ATCC 27325 / DSM 5911</strain>
    </source>
</reference>
<reference key="5">
    <citation type="journal article" date="2003" name="FEMS Microbiol. Lett.">
        <title>Regulation of the isofunctional genes ubiD and ubiX of the ubiquinone biosynthetic pathway of Escherichia coli.</title>
        <authorList>
            <person name="Zhang H."/>
            <person name="Javor G.T."/>
        </authorList>
    </citation>
    <scope>INDUCTION</scope>
    <source>
        <strain>K12 / MC4100 / ATCC 35695 / DSM 6574</strain>
    </source>
</reference>
<reference key="6">
    <citation type="journal article" date="2006" name="J. Bacteriol.">
        <title>Genetic evidence for an interaction of the UbiG O-methyltransferase with UbiX in Escherichia coli coenzyme Q biosynthesis.</title>
        <authorList>
            <person name="Gulmezian M."/>
            <person name="Zhang H."/>
            <person name="Javor G.T."/>
            <person name="Clarke C.F."/>
        </authorList>
    </citation>
    <scope>FUNCTION</scope>
</reference>
<reference key="7">
    <citation type="journal article" date="2007" name="Arch. Biochem. Biophys.">
        <title>The role of UbiX in Escherichia coli coenzyme Q biosynthesis.</title>
        <authorList>
            <person name="Gulmezian M."/>
            <person name="Hyman K.R."/>
            <person name="Marbois B.N."/>
            <person name="Clarke C.F."/>
            <person name="Javor G.T."/>
        </authorList>
    </citation>
    <scope>FUNCTION</scope>
    <scope>DISRUPTION PHENOTYPE</scope>
    <source>
        <strain>K12 / MC4100 / ATCC 35695 / DSM 6574</strain>
    </source>
</reference>
<accession>P0AG03</accession>
<accession>P09550</accession>
<accession>P77715</accession>
<gene>
    <name evidence="1" type="primary">ubiX</name>
    <name type="synonym">dedF</name>
    <name type="ordered locus">b2311</name>
    <name type="ordered locus">JW2308</name>
</gene>
<proteinExistence type="evidence at transcript level"/>